<reference key="1">
    <citation type="journal article" date="2002" name="DNA Res.">
        <title>Abundant poly(A)-bearing RNAs that lack open reading frames in Schizosaccharomyces pombe.</title>
        <authorList>
            <person name="Watanabe T."/>
            <person name="Miyashita K."/>
            <person name="Saito T.T."/>
            <person name="Nabeshima K."/>
            <person name="Nojima H."/>
        </authorList>
    </citation>
    <scope>NUCLEOTIDE SEQUENCE [MRNA]</scope>
    <source>
        <strain>CD16-1</strain>
    </source>
</reference>
<reference key="2">
    <citation type="journal article" date="2002" name="Nature">
        <title>The genome sequence of Schizosaccharomyces pombe.</title>
        <authorList>
            <person name="Wood V."/>
            <person name="Gwilliam R."/>
            <person name="Rajandream M.A."/>
            <person name="Lyne M.H."/>
            <person name="Lyne R."/>
            <person name="Stewart A."/>
            <person name="Sgouros J.G."/>
            <person name="Peat N."/>
            <person name="Hayles J."/>
            <person name="Baker S.G."/>
            <person name="Basham D."/>
            <person name="Bowman S."/>
            <person name="Brooks K."/>
            <person name="Brown D."/>
            <person name="Brown S."/>
            <person name="Chillingworth T."/>
            <person name="Churcher C.M."/>
            <person name="Collins M."/>
            <person name="Connor R."/>
            <person name="Cronin A."/>
            <person name="Davis P."/>
            <person name="Feltwell T."/>
            <person name="Fraser A."/>
            <person name="Gentles S."/>
            <person name="Goble A."/>
            <person name="Hamlin N."/>
            <person name="Harris D.E."/>
            <person name="Hidalgo J."/>
            <person name="Hodgson G."/>
            <person name="Holroyd S."/>
            <person name="Hornsby T."/>
            <person name="Howarth S."/>
            <person name="Huckle E.J."/>
            <person name="Hunt S."/>
            <person name="Jagels K."/>
            <person name="James K.D."/>
            <person name="Jones L."/>
            <person name="Jones M."/>
            <person name="Leather S."/>
            <person name="McDonald S."/>
            <person name="McLean J."/>
            <person name="Mooney P."/>
            <person name="Moule S."/>
            <person name="Mungall K.L."/>
            <person name="Murphy L.D."/>
            <person name="Niblett D."/>
            <person name="Odell C."/>
            <person name="Oliver K."/>
            <person name="O'Neil S."/>
            <person name="Pearson D."/>
            <person name="Quail M.A."/>
            <person name="Rabbinowitsch E."/>
            <person name="Rutherford K.M."/>
            <person name="Rutter S."/>
            <person name="Saunders D."/>
            <person name="Seeger K."/>
            <person name="Sharp S."/>
            <person name="Skelton J."/>
            <person name="Simmonds M.N."/>
            <person name="Squares R."/>
            <person name="Squares S."/>
            <person name="Stevens K."/>
            <person name="Taylor K."/>
            <person name="Taylor R.G."/>
            <person name="Tivey A."/>
            <person name="Walsh S.V."/>
            <person name="Warren T."/>
            <person name="Whitehead S."/>
            <person name="Woodward J.R."/>
            <person name="Volckaert G."/>
            <person name="Aert R."/>
            <person name="Robben J."/>
            <person name="Grymonprez B."/>
            <person name="Weltjens I."/>
            <person name="Vanstreels E."/>
            <person name="Rieger M."/>
            <person name="Schaefer M."/>
            <person name="Mueller-Auer S."/>
            <person name="Gabel C."/>
            <person name="Fuchs M."/>
            <person name="Duesterhoeft A."/>
            <person name="Fritzc C."/>
            <person name="Holzer E."/>
            <person name="Moestl D."/>
            <person name="Hilbert H."/>
            <person name="Borzym K."/>
            <person name="Langer I."/>
            <person name="Beck A."/>
            <person name="Lehrach H."/>
            <person name="Reinhardt R."/>
            <person name="Pohl T.M."/>
            <person name="Eger P."/>
            <person name="Zimmermann W."/>
            <person name="Wedler H."/>
            <person name="Wambutt R."/>
            <person name="Purnelle B."/>
            <person name="Goffeau A."/>
            <person name="Cadieu E."/>
            <person name="Dreano S."/>
            <person name="Gloux S."/>
            <person name="Lelaure V."/>
            <person name="Mottier S."/>
            <person name="Galibert F."/>
            <person name="Aves S.J."/>
            <person name="Xiang Z."/>
            <person name="Hunt C."/>
            <person name="Moore K."/>
            <person name="Hurst S.M."/>
            <person name="Lucas M."/>
            <person name="Rochet M."/>
            <person name="Gaillardin C."/>
            <person name="Tallada V.A."/>
            <person name="Garzon A."/>
            <person name="Thode G."/>
            <person name="Daga R.R."/>
            <person name="Cruzado L."/>
            <person name="Jimenez J."/>
            <person name="Sanchez M."/>
            <person name="del Rey F."/>
            <person name="Benito J."/>
            <person name="Dominguez A."/>
            <person name="Revuelta J.L."/>
            <person name="Moreno S."/>
            <person name="Armstrong J."/>
            <person name="Forsburg S.L."/>
            <person name="Cerutti L."/>
            <person name="Lowe T."/>
            <person name="McCombie W.R."/>
            <person name="Paulsen I."/>
            <person name="Potashkin J."/>
            <person name="Shpakovski G.V."/>
            <person name="Ussery D."/>
            <person name="Barrell B.G."/>
            <person name="Nurse P."/>
        </authorList>
    </citation>
    <scope>NUCLEOTIDE SEQUENCE [LARGE SCALE GENOMIC DNA]</scope>
    <source>
        <strain>972 / ATCC 24843</strain>
    </source>
</reference>
<reference key="3">
    <citation type="journal article" date="2008" name="J. Proteome Res.">
        <title>Phosphoproteome analysis of fission yeast.</title>
        <authorList>
            <person name="Wilson-Grady J.T."/>
            <person name="Villen J."/>
            <person name="Gygi S.P."/>
        </authorList>
    </citation>
    <scope>PHOSPHORYLATION [LARGE SCALE ANALYSIS] AT SER-21</scope>
    <scope>IDENTIFICATION BY MASS SPECTROMETRY</scope>
</reference>
<accession>O14108</accession>
<accession>Q10590</accession>
<organism>
    <name type="scientific">Schizosaccharomyces pombe (strain 972 / ATCC 24843)</name>
    <name type="common">Fission yeast</name>
    <dbReference type="NCBI Taxonomy" id="284812"/>
    <lineage>
        <taxon>Eukaryota</taxon>
        <taxon>Fungi</taxon>
        <taxon>Dikarya</taxon>
        <taxon>Ascomycota</taxon>
        <taxon>Taphrinomycotina</taxon>
        <taxon>Schizosaccharomycetes</taxon>
        <taxon>Schizosaccharomycetales</taxon>
        <taxon>Schizosaccharomycetaceae</taxon>
        <taxon>Schizosaccharomyces</taxon>
    </lineage>
</organism>
<feature type="chain" id="PRO_0000197087" description="DNA-binding protein eta2">
    <location>
        <begin position="1"/>
        <end position="569"/>
    </location>
</feature>
<feature type="domain" description="Myb-like 1" evidence="2">
    <location>
        <begin position="322"/>
        <end position="371"/>
    </location>
</feature>
<feature type="domain" description="Myb-like 2" evidence="2">
    <location>
        <begin position="377"/>
        <end position="459"/>
    </location>
</feature>
<feature type="region of interest" description="Disordered" evidence="3">
    <location>
        <begin position="1"/>
        <end position="26"/>
    </location>
</feature>
<feature type="region of interest" description="Disordered" evidence="3">
    <location>
        <begin position="133"/>
        <end position="159"/>
    </location>
</feature>
<feature type="region of interest" description="Disordered" evidence="3">
    <location>
        <begin position="459"/>
        <end position="487"/>
    </location>
</feature>
<feature type="compositionally biased region" description="Polar residues" evidence="3">
    <location>
        <begin position="9"/>
        <end position="26"/>
    </location>
</feature>
<feature type="compositionally biased region" description="Basic residues" evidence="3">
    <location>
        <begin position="474"/>
        <end position="487"/>
    </location>
</feature>
<feature type="modified residue" description="Phosphoserine" evidence="4">
    <location>
        <position position="21"/>
    </location>
</feature>
<comment type="subcellular location">
    <subcellularLocation>
        <location evidence="1">Nucleus</location>
    </subcellularLocation>
</comment>
<evidence type="ECO:0000250" key="1"/>
<evidence type="ECO:0000255" key="2">
    <source>
        <dbReference type="PROSITE-ProRule" id="PRU00133"/>
    </source>
</evidence>
<evidence type="ECO:0000256" key="3">
    <source>
        <dbReference type="SAM" id="MobiDB-lite"/>
    </source>
</evidence>
<evidence type="ECO:0000269" key="4">
    <source>
    </source>
</evidence>
<name>ETA2_SCHPO</name>
<gene>
    <name type="primary">eta2</name>
    <name type="ORF">SPAC31G5.10</name>
</gene>
<keyword id="KW-0238">DNA-binding</keyword>
<keyword id="KW-0539">Nucleus</keyword>
<keyword id="KW-0597">Phosphoprotein</keyword>
<keyword id="KW-1185">Reference proteome</keyword>
<keyword id="KW-0677">Repeat</keyword>
<proteinExistence type="evidence at protein level"/>
<protein>
    <recommendedName>
        <fullName>DNA-binding protein eta2</fullName>
    </recommendedName>
</protein>
<dbReference type="EMBL" id="AB084881">
    <property type="protein sequence ID" value="BAC54905.1"/>
    <property type="molecule type" value="mRNA"/>
</dbReference>
<dbReference type="EMBL" id="CU329670">
    <property type="protein sequence ID" value="CAB11694.1"/>
    <property type="molecule type" value="Genomic_DNA"/>
</dbReference>
<dbReference type="PIR" id="T38627">
    <property type="entry name" value="T38627"/>
</dbReference>
<dbReference type="RefSeq" id="NP_594010.1">
    <property type="nucleotide sequence ID" value="NM_001019436.1"/>
</dbReference>
<dbReference type="SMR" id="O14108"/>
<dbReference type="BioGRID" id="279031">
    <property type="interactions" value="6"/>
</dbReference>
<dbReference type="FunCoup" id="O14108">
    <property type="interactions" value="278"/>
</dbReference>
<dbReference type="STRING" id="284812.O14108"/>
<dbReference type="iPTMnet" id="O14108"/>
<dbReference type="PaxDb" id="4896-SPAC31G5.10.1"/>
<dbReference type="EnsemblFungi" id="SPAC31G5.10.1">
    <property type="protein sequence ID" value="SPAC31G5.10.1:pep"/>
    <property type="gene ID" value="SPAC31G5.10"/>
</dbReference>
<dbReference type="GeneID" id="2542575"/>
<dbReference type="KEGG" id="spo:2542575"/>
<dbReference type="PomBase" id="SPAC31G5.10">
    <property type="gene designation" value="eta2"/>
</dbReference>
<dbReference type="VEuPathDB" id="FungiDB:SPAC31G5.10"/>
<dbReference type="eggNOG" id="KOG0051">
    <property type="taxonomic scope" value="Eukaryota"/>
</dbReference>
<dbReference type="HOGENOM" id="CLU_483250_0_0_1"/>
<dbReference type="InParanoid" id="O14108"/>
<dbReference type="OMA" id="YMRAIFE"/>
<dbReference type="PhylomeDB" id="O14108"/>
<dbReference type="PRO" id="PR:O14108"/>
<dbReference type="Proteomes" id="UP000002485">
    <property type="component" value="Chromosome I"/>
</dbReference>
<dbReference type="GO" id="GO:0005730">
    <property type="term" value="C:nucleolus"/>
    <property type="evidence" value="ECO:0007005"/>
    <property type="project" value="PomBase"/>
</dbReference>
<dbReference type="GO" id="GO:0005634">
    <property type="term" value="C:nucleus"/>
    <property type="evidence" value="ECO:0007005"/>
    <property type="project" value="PomBase"/>
</dbReference>
<dbReference type="GO" id="GO:0043565">
    <property type="term" value="F:sequence-specific DNA binding"/>
    <property type="evidence" value="ECO:0000266"/>
    <property type="project" value="PomBase"/>
</dbReference>
<dbReference type="GO" id="GO:0006363">
    <property type="term" value="P:termination of RNA polymerase I transcription"/>
    <property type="evidence" value="ECO:0000266"/>
    <property type="project" value="PomBase"/>
</dbReference>
<dbReference type="CDD" id="cd00167">
    <property type="entry name" value="SANT"/>
    <property type="match status" value="2"/>
</dbReference>
<dbReference type="Gene3D" id="1.10.10.60">
    <property type="entry name" value="Homeodomain-like"/>
    <property type="match status" value="2"/>
</dbReference>
<dbReference type="InterPro" id="IPR051651">
    <property type="entry name" value="DMTF1_DNA-bind_reg"/>
</dbReference>
<dbReference type="InterPro" id="IPR009057">
    <property type="entry name" value="Homeodomain-like_sf"/>
</dbReference>
<dbReference type="InterPro" id="IPR001005">
    <property type="entry name" value="SANT/Myb"/>
</dbReference>
<dbReference type="PANTHER" id="PTHR46380">
    <property type="entry name" value="CYCLIN-D-BINDING MYB-LIKE TRANSCRIPTION FACTOR 1"/>
    <property type="match status" value="1"/>
</dbReference>
<dbReference type="PANTHER" id="PTHR46380:SF2">
    <property type="entry name" value="CYCLIN-D-BINDING MYB-LIKE TRANSCRIPTION FACTOR 1"/>
    <property type="match status" value="1"/>
</dbReference>
<dbReference type="Pfam" id="PF00249">
    <property type="entry name" value="Myb_DNA-binding"/>
    <property type="match status" value="1"/>
</dbReference>
<dbReference type="SMART" id="SM00717">
    <property type="entry name" value="SANT"/>
    <property type="match status" value="3"/>
</dbReference>
<dbReference type="SUPFAM" id="SSF46689">
    <property type="entry name" value="Homeodomain-like"/>
    <property type="match status" value="2"/>
</dbReference>
<dbReference type="PROSITE" id="PS50090">
    <property type="entry name" value="MYB_LIKE"/>
    <property type="match status" value="2"/>
</dbReference>
<sequence>MMLAIDMTINENQGTRSNLESPTLSCSSKGAMQERDVMFTDHNTFNITNNKSRPGSLMKSMKRKDVYEFDEDNEFEFEMGSLIHKPSRAHSLGGTSEPVSDDHKDCMEATRQLLENSPLSSVVVKTCSDHASKRKIARSSSDDSESKVESTNSFNAKKRKDAWTEEHEKWFQARIDELLTIRSISREQMIEILEDEHAGSRLQGFLESVASFLNRKENSLLKYMRAFFQVAGYEKIDIGSLAAEEDSQLNFSLEDAQVIQKVVLSYCNNEGVDLQEFGFRMSSSSLRHTNINFLYNELRELLPTSISRKGIIRYLKEIYKPLDPKDRNAWEESELKKLYTLVEQEGTRWNSIANKLGTSPAACMSQWRFVVGTSTQETIDRRKLWTNEEEAKLLDLVKSSYRSSFHTKKMTSLFTHNNHTTSNIQREIPASDSIAWHSISKKLGTKSPESCRKQYEKTIASYSSNQRQEEDQGKKRKKRKKKKSKGKRKFYVADSLKLLEHVQRQCGEAISINAIDWKGIVKQMPKWSEEELRAQATNLVASVRGWKKTRLSESVRIAITDLKSLPPDV</sequence>